<feature type="signal peptide" evidence="1">
    <location>
        <begin position="1"/>
        <end position="22"/>
    </location>
</feature>
<feature type="chain" id="PRO_0000282153" description="Uncharacterized lipoprotein SAR2573">
    <location>
        <begin position="23"/>
        <end position="257"/>
    </location>
</feature>
<feature type="lipid moiety-binding region" description="N-palmitoyl cysteine" evidence="1">
    <location>
        <position position="23"/>
    </location>
</feature>
<feature type="lipid moiety-binding region" description="S-diacylglycerol cysteine" evidence="1">
    <location>
        <position position="23"/>
    </location>
</feature>
<protein>
    <recommendedName>
        <fullName>Uncharacterized lipoprotein SAR2573</fullName>
    </recommendedName>
</protein>
<sequence length="257" mass="30184">MIHSKRLKMCLCLIILSVFIGACGMKKEESSKDKQIKENFNKTLSLYPTKNLEDFYDKEGFRDEEFDKGDKGTWIVDSEMVVELKDKKMESRSMVLYINRNTRTTKGNFIVRELWEDSKGYAQSKDTKYPVKMEHNRIIPTKQIADDKLRKEIENFKFFVQYGDFKDINDYKDGDISYNPNVPSYSAEYQLSNNDYNVKQLRKRYNIPTKKAPKLLIKGDGDLKGSSIGHKNLEFTFVENKEENIYFTDSINFKPTE</sequence>
<proteinExistence type="inferred from homology"/>
<reference key="1">
    <citation type="journal article" date="2004" name="Proc. Natl. Acad. Sci. U.S.A.">
        <title>Complete genomes of two clinical Staphylococcus aureus strains: evidence for the rapid evolution of virulence and drug resistance.</title>
        <authorList>
            <person name="Holden M.T.G."/>
            <person name="Feil E.J."/>
            <person name="Lindsay J.A."/>
            <person name="Peacock S.J."/>
            <person name="Day N.P.J."/>
            <person name="Enright M.C."/>
            <person name="Foster T.J."/>
            <person name="Moore C.E."/>
            <person name="Hurst L."/>
            <person name="Atkin R."/>
            <person name="Barron A."/>
            <person name="Bason N."/>
            <person name="Bentley S.D."/>
            <person name="Chillingworth C."/>
            <person name="Chillingworth T."/>
            <person name="Churcher C."/>
            <person name="Clark L."/>
            <person name="Corton C."/>
            <person name="Cronin A."/>
            <person name="Doggett J."/>
            <person name="Dowd L."/>
            <person name="Feltwell T."/>
            <person name="Hance Z."/>
            <person name="Harris B."/>
            <person name="Hauser H."/>
            <person name="Holroyd S."/>
            <person name="Jagels K."/>
            <person name="James K.D."/>
            <person name="Lennard N."/>
            <person name="Line A."/>
            <person name="Mayes R."/>
            <person name="Moule S."/>
            <person name="Mungall K."/>
            <person name="Ormond D."/>
            <person name="Quail M.A."/>
            <person name="Rabbinowitsch E."/>
            <person name="Rutherford K.M."/>
            <person name="Sanders M."/>
            <person name="Sharp S."/>
            <person name="Simmonds M."/>
            <person name="Stevens K."/>
            <person name="Whitehead S."/>
            <person name="Barrell B.G."/>
            <person name="Spratt B.G."/>
            <person name="Parkhill J."/>
        </authorList>
    </citation>
    <scope>NUCLEOTIDE SEQUENCE [LARGE SCALE GENOMIC DNA]</scope>
    <source>
        <strain>MRSA252</strain>
    </source>
</reference>
<name>Y2573_STAAR</name>
<accession>Q6GDV2</accession>
<keyword id="KW-1003">Cell membrane</keyword>
<keyword id="KW-0449">Lipoprotein</keyword>
<keyword id="KW-0472">Membrane</keyword>
<keyword id="KW-0564">Palmitate</keyword>
<keyword id="KW-0732">Signal</keyword>
<evidence type="ECO:0000255" key="1">
    <source>
        <dbReference type="PROSITE-ProRule" id="PRU00303"/>
    </source>
</evidence>
<evidence type="ECO:0000305" key="2"/>
<organism>
    <name type="scientific">Staphylococcus aureus (strain MRSA252)</name>
    <dbReference type="NCBI Taxonomy" id="282458"/>
    <lineage>
        <taxon>Bacteria</taxon>
        <taxon>Bacillati</taxon>
        <taxon>Bacillota</taxon>
        <taxon>Bacilli</taxon>
        <taxon>Bacillales</taxon>
        <taxon>Staphylococcaceae</taxon>
        <taxon>Staphylococcus</taxon>
    </lineage>
</organism>
<comment type="subcellular location">
    <subcellularLocation>
        <location evidence="1">Cell membrane</location>
        <topology evidence="1">Lipid-anchor</topology>
    </subcellularLocation>
</comment>
<comment type="similarity">
    <text evidence="2">Belongs to the staphylococcal tandem lipoprotein family.</text>
</comment>
<comment type="sequence caution" evidence="2">
    <conflict type="erroneous initiation">
        <sequence resource="EMBL-CDS" id="CAG41553"/>
    </conflict>
</comment>
<dbReference type="EMBL" id="BX571856">
    <property type="protein sequence ID" value="CAG41553.1"/>
    <property type="status" value="ALT_INIT"/>
    <property type="molecule type" value="Genomic_DNA"/>
</dbReference>
<dbReference type="SMR" id="Q6GDV2"/>
<dbReference type="KEGG" id="sar:SAR2573"/>
<dbReference type="HOGENOM" id="CLU_071589_0_1_9"/>
<dbReference type="Proteomes" id="UP000000596">
    <property type="component" value="Chromosome"/>
</dbReference>
<dbReference type="GO" id="GO:0005886">
    <property type="term" value="C:plasma membrane"/>
    <property type="evidence" value="ECO:0007669"/>
    <property type="project" value="UniProtKB-SubCell"/>
</dbReference>
<dbReference type="Gene3D" id="2.50.20.40">
    <property type="match status" value="1"/>
</dbReference>
<dbReference type="InterPro" id="IPR007595">
    <property type="entry name" value="Csa"/>
</dbReference>
<dbReference type="InterPro" id="IPR038641">
    <property type="entry name" value="Csa_sf"/>
</dbReference>
<dbReference type="NCBIfam" id="TIGR01742">
    <property type="entry name" value="SA_tandem_lipo"/>
    <property type="match status" value="1"/>
</dbReference>
<dbReference type="Pfam" id="PF04507">
    <property type="entry name" value="DUF576"/>
    <property type="match status" value="1"/>
</dbReference>
<dbReference type="PROSITE" id="PS51257">
    <property type="entry name" value="PROKAR_LIPOPROTEIN"/>
    <property type="match status" value="1"/>
</dbReference>
<gene>
    <name type="ordered locus">SAR2573</name>
</gene>